<gene>
    <name type="ORF">ORF2a</name>
</gene>
<feature type="chain" id="PRO_0000083274" description="RNA-directed RNA polymerase 2a">
    <location>
        <begin position="1"/>
        <end position="857"/>
    </location>
</feature>
<feature type="domain" description="RdRp catalytic" evidence="2">
    <location>
        <begin position="511"/>
        <end position="624"/>
    </location>
</feature>
<feature type="region of interest" description="Disordered" evidence="3">
    <location>
        <begin position="785"/>
        <end position="857"/>
    </location>
</feature>
<feature type="compositionally biased region" description="Polar residues" evidence="3">
    <location>
        <begin position="804"/>
        <end position="816"/>
    </location>
</feature>
<feature type="compositionally biased region" description="Polar residues" evidence="3">
    <location>
        <begin position="824"/>
        <end position="840"/>
    </location>
</feature>
<feature type="compositionally biased region" description="Basic and acidic residues" evidence="3">
    <location>
        <begin position="846"/>
        <end position="857"/>
    </location>
</feature>
<accession>Q83262</accession>
<organismHost>
    <name type="scientific">Cucumis sativus</name>
    <name type="common">Cucumber</name>
    <dbReference type="NCBI Taxonomy" id="3659"/>
</organismHost>
<organismHost>
    <name type="scientific">Solanum lycopersicum</name>
    <name type="common">Tomato</name>
    <name type="synonym">Lycopersicon esculentum</name>
    <dbReference type="NCBI Taxonomy" id="4081"/>
</organismHost>
<organismHost>
    <name type="scientific">Spinacia oleracea</name>
    <name type="common">Spinach</name>
    <dbReference type="NCBI Taxonomy" id="3562"/>
</organismHost>
<sequence length="857" mass="96710">MAFPAPAFSLANLLNGSYGVDTPEDVERLRSEQREEAAAACRNYRPLPAVDVSESVSEDAHSLQTPDGAPAEAVSDEFVTYGAEDYLEKSDDELLVAFETMVKPMRIGQLWCPAFNKCSFISSIAMARALLLAPRTSHRTMKCFEDLVAAIYTKSDFYYSEECEADDIQMDISSRDVPGYSFEPWSRTSGFEPPPICEACDMIMYQCPCFDFNALKKSCAERTFADDYVIEGLDGVVDNATLLSNLGPFLVPVKCQYEKCPTPTIAIPPNLNRATDRVDINLVQSICDSTLPTHSNYDDSFHQVFVESADYSIDLDHVRLRQSDLIAKIPDSGHMIPVLNTGSGHKRVGTTKEVLTAIKKRNADVPELGDSVNLSRLSKAVAERFFISYINGNSLASSNFVNVVSNFHDYMEKWKSSGLSYDDLPDLHAENLQFYDHMIKSDVKPVVSDTLNIDRPVPATITYHKKSITSQFSPLFTALFERFQRCLRERIILPVGKISSLEMAGFDVKSKYCLEIDLSKFDKSQGEFHLLIQEHILNGLGCPAPITKWWCDFHRFSYIRDRRAGVGMPISFQRRTGDAFTYFGNTIVTMAEFAWCYDTDQFEKLLFSGDDSLGFSLLPPVGDPSKFTTLYNMEAKVMEPSVPYICSKFLLSDEFGNTFSVPDPLREVQRLGTKKIPYSDNDEFLFAHFMSFVDRLKFLDRMSQSCIDQLSIFFELKYKKSGEEAALMLGAFKKYTANFQSYKELYYSDRRQCELINSFCSTEFRVERVNSNKLRKKYGIERRCDDKRRTPTGSYGGGEEAETKVSQTKSTGTRSQKSQRESAFKSQTVPLPTVLSSGWSGTDRVVPPRERGGVTRA</sequence>
<organism>
    <name type="scientific">Cucumber mosaic virus (strain Iizuka)</name>
    <name type="common">CMV</name>
    <dbReference type="NCBI Taxonomy" id="117113"/>
    <lineage>
        <taxon>Viruses</taxon>
        <taxon>Riboviria</taxon>
        <taxon>Orthornavirae</taxon>
        <taxon>Kitrinoviricota</taxon>
        <taxon>Alsuviricetes</taxon>
        <taxon>Martellivirales</taxon>
        <taxon>Bromoviridae</taxon>
        <taxon>Cucumovirus</taxon>
        <taxon>Cucumber mosaic virus</taxon>
    </lineage>
</organism>
<protein>
    <recommendedName>
        <fullName>RNA-directed RNA polymerase 2a</fullName>
        <shortName>protein 2a</shortName>
        <ecNumber>2.7.7.48</ecNumber>
    </recommendedName>
</protein>
<keyword id="KW-0547">Nucleotide-binding</keyword>
<keyword id="KW-0548">Nucleotidyltransferase</keyword>
<keyword id="KW-0696">RNA-directed RNA polymerase</keyword>
<keyword id="KW-0808">Transferase</keyword>
<keyword id="KW-0693">Viral RNA replication</keyword>
<comment type="function">
    <text evidence="4">RNA-dependent RNA polymerase which replicates the viral genome composed of 3 RNA segments, RNA1, RNA2 and RNA3.</text>
</comment>
<comment type="catalytic activity">
    <reaction evidence="2">
        <text>RNA(n) + a ribonucleoside 5'-triphosphate = RNA(n+1) + diphosphate</text>
        <dbReference type="Rhea" id="RHEA:21248"/>
        <dbReference type="Rhea" id="RHEA-COMP:14527"/>
        <dbReference type="Rhea" id="RHEA-COMP:17342"/>
        <dbReference type="ChEBI" id="CHEBI:33019"/>
        <dbReference type="ChEBI" id="CHEBI:61557"/>
        <dbReference type="ChEBI" id="CHEBI:140395"/>
        <dbReference type="EC" id="2.7.7.48"/>
    </reaction>
</comment>
<comment type="subunit">
    <text evidence="1">Interacts with replication protein 1a.</text>
</comment>
<comment type="similarity">
    <text evidence="4">Belongs to the ssRNA positive-strand viruses RNA-directed RNA polymerase family.</text>
</comment>
<proteinExistence type="inferred from homology"/>
<dbReference type="EC" id="2.7.7.48"/>
<dbReference type="EMBL" id="D16406">
    <property type="protein sequence ID" value="BAA03890.1"/>
    <property type="molecule type" value="Genomic_RNA"/>
</dbReference>
<dbReference type="Proteomes" id="UP000246914">
    <property type="component" value="Genome"/>
</dbReference>
<dbReference type="GO" id="GO:0000166">
    <property type="term" value="F:nucleotide binding"/>
    <property type="evidence" value="ECO:0007669"/>
    <property type="project" value="UniProtKB-KW"/>
</dbReference>
<dbReference type="GO" id="GO:0003723">
    <property type="term" value="F:RNA binding"/>
    <property type="evidence" value="ECO:0007669"/>
    <property type="project" value="InterPro"/>
</dbReference>
<dbReference type="GO" id="GO:0003968">
    <property type="term" value="F:RNA-directed RNA polymerase activity"/>
    <property type="evidence" value="ECO:0007669"/>
    <property type="project" value="UniProtKB-KW"/>
</dbReference>
<dbReference type="GO" id="GO:0006351">
    <property type="term" value="P:DNA-templated transcription"/>
    <property type="evidence" value="ECO:0007669"/>
    <property type="project" value="InterPro"/>
</dbReference>
<dbReference type="GO" id="GO:0039690">
    <property type="term" value="P:positive stranded viral RNA replication"/>
    <property type="evidence" value="ECO:0007669"/>
    <property type="project" value="InterPro"/>
</dbReference>
<dbReference type="CDD" id="cd23252">
    <property type="entry name" value="Bromoviridae_RdRp"/>
    <property type="match status" value="1"/>
</dbReference>
<dbReference type="InterPro" id="IPR047309">
    <property type="entry name" value="Bromoviridae_RdRp"/>
</dbReference>
<dbReference type="InterPro" id="IPR043502">
    <property type="entry name" value="DNA/RNA_pol_sf"/>
</dbReference>
<dbReference type="InterPro" id="IPR001788">
    <property type="entry name" value="RNA-dep_RNA_pol_alsuvir"/>
</dbReference>
<dbReference type="InterPro" id="IPR007094">
    <property type="entry name" value="RNA-dir_pol_PSvirus"/>
</dbReference>
<dbReference type="Pfam" id="PF00978">
    <property type="entry name" value="RdRP_2"/>
    <property type="match status" value="1"/>
</dbReference>
<dbReference type="SUPFAM" id="SSF56672">
    <property type="entry name" value="DNA/RNA polymerases"/>
    <property type="match status" value="1"/>
</dbReference>
<dbReference type="PROSITE" id="PS50507">
    <property type="entry name" value="RDRP_SSRNA_POS"/>
    <property type="match status" value="1"/>
</dbReference>
<reference key="1">
    <citation type="journal article" date="1997" name="Nihon Shokubutsu Byori Gakkaiho">
        <title>A possible role of RNA 2 of cucumber mosaic cucumovirus as a determinant of infection phenotype on cowpea.</title>
        <authorList>
            <person name="Karasawa A."/>
            <person name="Ito A."/>
            <person name="Okada I."/>
            <person name="Hase S."/>
            <person name="Ehara Y."/>
        </authorList>
    </citation>
    <scope>NUCLEOTIDE SEQUENCE [GENOMIC RNA]</scope>
</reference>
<evidence type="ECO:0000250" key="1"/>
<evidence type="ECO:0000255" key="2">
    <source>
        <dbReference type="PROSITE-ProRule" id="PRU00539"/>
    </source>
</evidence>
<evidence type="ECO:0000256" key="3">
    <source>
        <dbReference type="SAM" id="MobiDB-lite"/>
    </source>
</evidence>
<evidence type="ECO:0000305" key="4"/>
<name>RDRP_CMVII</name>